<accession>Q3V1H1</accession>
<accession>A6H5W7</accession>
<accession>Q66LN2</accession>
<accession>Q8BSF0</accession>
<protein>
    <recommendedName>
        <fullName>Cytoskeleton-associated protein 2</fullName>
    </recommendedName>
</protein>
<organism>
    <name type="scientific">Mus musculus</name>
    <name type="common">Mouse</name>
    <dbReference type="NCBI Taxonomy" id="10090"/>
    <lineage>
        <taxon>Eukaryota</taxon>
        <taxon>Metazoa</taxon>
        <taxon>Chordata</taxon>
        <taxon>Craniata</taxon>
        <taxon>Vertebrata</taxon>
        <taxon>Euteleostomi</taxon>
        <taxon>Mammalia</taxon>
        <taxon>Eutheria</taxon>
        <taxon>Euarchontoglires</taxon>
        <taxon>Glires</taxon>
        <taxon>Rodentia</taxon>
        <taxon>Myomorpha</taxon>
        <taxon>Muroidea</taxon>
        <taxon>Muridae</taxon>
        <taxon>Murinae</taxon>
        <taxon>Mus</taxon>
        <taxon>Mus</taxon>
    </lineage>
</organism>
<comment type="function">
    <text evidence="4 5">Possesses microtubule stabilizing properties. Involved in regulating aneuploidy, cell cycling, and cell death in a p53-dependent manner.</text>
</comment>
<comment type="subunit">
    <text>Associates with alpha- and beta-tubulins.</text>
</comment>
<comment type="subcellular location">
    <subcellularLocation>
        <location>Cytoplasm</location>
        <location>Cytoskeleton</location>
    </subcellularLocation>
    <subcellularLocation>
        <location>Cytoplasm</location>
        <location>Cytoskeleton</location>
        <location>Spindle</location>
    </subcellularLocation>
    <subcellularLocation>
        <location>Cytoplasm</location>
        <location>Cytoskeleton</location>
        <location>Spindle pole</location>
    </subcellularLocation>
    <text evidence="1">Contrary to the ectopically expressed protein, endogenous CKAP2 does not colocalize with microtubules in G1, S and early G2. At late G2 and prophase after separation of duplicated centrosomes, colocalizes with gamma-tubulin and centrosome-proximal microtubules. From prometaphase through anaphase B, colocalizes with mitotic spindle poles and spindle microtubules. During cytokinesis, absent from midbody microtubules (By similarity).</text>
</comment>
<comment type="induction">
    <text evidence="4 5">By constitutively activated RET proteins. By p53/TP53.</text>
</comment>
<comment type="similarity">
    <text evidence="6">Belongs to the CKAP2 family.</text>
</comment>
<comment type="sequence caution" evidence="6">
    <conflict type="erroneous initiation">
        <sequence resource="EMBL-CDS" id="BAC28747"/>
    </conflict>
</comment>
<keyword id="KW-0053">Apoptosis</keyword>
<keyword id="KW-0131">Cell cycle</keyword>
<keyword id="KW-0963">Cytoplasm</keyword>
<keyword id="KW-0206">Cytoskeleton</keyword>
<keyword id="KW-0493">Microtubule</keyword>
<keyword id="KW-0597">Phosphoprotein</keyword>
<keyword id="KW-1185">Reference proteome</keyword>
<proteinExistence type="evidence at protein level"/>
<gene>
    <name evidence="9" type="primary">Ckap2</name>
</gene>
<feature type="chain" id="PRO_0000245775" description="Cytoskeleton-associated protein 2">
    <location>
        <begin position="1"/>
        <end position="664"/>
    </location>
</feature>
<feature type="region of interest" description="Disordered" evidence="3">
    <location>
        <begin position="1"/>
        <end position="38"/>
    </location>
</feature>
<feature type="region of interest" description="Association with alpha- and beta-tubulin" evidence="4">
    <location>
        <begin position="160"/>
        <end position="319"/>
    </location>
</feature>
<feature type="region of interest" description="Disordered" evidence="3">
    <location>
        <begin position="254"/>
        <end position="273"/>
    </location>
</feature>
<feature type="region of interest" description="Disordered" evidence="3">
    <location>
        <begin position="283"/>
        <end position="328"/>
    </location>
</feature>
<feature type="region of interest" description="Disordered" evidence="3">
    <location>
        <begin position="366"/>
        <end position="393"/>
    </location>
</feature>
<feature type="region of interest" description="Disordered" evidence="3">
    <location>
        <begin position="512"/>
        <end position="545"/>
    </location>
</feature>
<feature type="compositionally biased region" description="Basic and acidic residues" evidence="3">
    <location>
        <begin position="28"/>
        <end position="38"/>
    </location>
</feature>
<feature type="compositionally biased region" description="Polar residues" evidence="3">
    <location>
        <begin position="300"/>
        <end position="309"/>
    </location>
</feature>
<feature type="compositionally biased region" description="Basic residues" evidence="3">
    <location>
        <begin position="366"/>
        <end position="375"/>
    </location>
</feature>
<feature type="compositionally biased region" description="Basic and acidic residues" evidence="3">
    <location>
        <begin position="533"/>
        <end position="545"/>
    </location>
</feature>
<feature type="modified residue" description="Phosphoserine" evidence="2">
    <location>
        <position position="186"/>
    </location>
</feature>
<feature type="modified residue" description="Phosphothreonine" evidence="10">
    <location>
        <position position="561"/>
    </location>
</feature>
<feature type="modified residue" description="Phosphoserine" evidence="2">
    <location>
        <position position="577"/>
    </location>
</feature>
<feature type="modified residue" description="Phosphothreonine" evidence="2">
    <location>
        <position position="579"/>
    </location>
</feature>
<feature type="modified residue" description="Phosphoserine" evidence="2">
    <location>
        <position position="584"/>
    </location>
</feature>
<feature type="sequence conflict" description="In Ref. 2; BAC28747." evidence="6" ref="2">
    <original>A</original>
    <variation>S</variation>
    <location>
        <position position="124"/>
    </location>
</feature>
<feature type="sequence conflict" description="In Ref. 1; AAU06608." evidence="6" ref="1">
    <original>V</original>
    <variation>A</variation>
    <location>
        <position position="379"/>
    </location>
</feature>
<dbReference type="EMBL" id="AY692438">
    <property type="protein sequence ID" value="AAU06608.1"/>
    <property type="molecule type" value="mRNA"/>
</dbReference>
<dbReference type="EMBL" id="AK034534">
    <property type="protein sequence ID" value="BAC28747.1"/>
    <property type="status" value="ALT_INIT"/>
    <property type="molecule type" value="mRNA"/>
</dbReference>
<dbReference type="EMBL" id="AK132463">
    <property type="protein sequence ID" value="BAE21180.1"/>
    <property type="molecule type" value="mRNA"/>
</dbReference>
<dbReference type="EMBL" id="BC145666">
    <property type="protein sequence ID" value="AAI45667.1"/>
    <property type="molecule type" value="mRNA"/>
</dbReference>
<dbReference type="EMBL" id="BC146023">
    <property type="protein sequence ID" value="AAI46024.1"/>
    <property type="molecule type" value="mRNA"/>
</dbReference>
<dbReference type="CCDS" id="CCDS22170.1"/>
<dbReference type="RefSeq" id="NP_001004140.2">
    <property type="nucleotide sequence ID" value="NM_001004140.2"/>
</dbReference>
<dbReference type="BioGRID" id="219859">
    <property type="interactions" value="1"/>
</dbReference>
<dbReference type="FunCoup" id="Q3V1H1">
    <property type="interactions" value="641"/>
</dbReference>
<dbReference type="IntAct" id="Q3V1H1">
    <property type="interactions" value="1"/>
</dbReference>
<dbReference type="MINT" id="Q3V1H1"/>
<dbReference type="STRING" id="10090.ENSMUSP00000039518"/>
<dbReference type="GlyGen" id="Q3V1H1">
    <property type="glycosylation" value="3 sites, 1 N-linked glycan (1 site), 1 O-linked glycan (2 sites)"/>
</dbReference>
<dbReference type="iPTMnet" id="Q3V1H1"/>
<dbReference type="PhosphoSitePlus" id="Q3V1H1"/>
<dbReference type="PaxDb" id="10090-ENSMUSP00000039518"/>
<dbReference type="PeptideAtlas" id="Q3V1H1"/>
<dbReference type="ProteomicsDB" id="279090"/>
<dbReference type="Pumba" id="Q3V1H1"/>
<dbReference type="Antibodypedia" id="1993">
    <property type="antibodies" value="133 antibodies from 24 providers"/>
</dbReference>
<dbReference type="Ensembl" id="ENSMUST00000046916.9">
    <property type="protein sequence ID" value="ENSMUSP00000039518.8"/>
    <property type="gene ID" value="ENSMUSG00000037725.9"/>
</dbReference>
<dbReference type="GeneID" id="80986"/>
<dbReference type="KEGG" id="mmu:80986"/>
<dbReference type="UCSC" id="uc009lcs.2">
    <property type="organism name" value="mouse"/>
</dbReference>
<dbReference type="AGR" id="MGI:1931797"/>
<dbReference type="CTD" id="26586"/>
<dbReference type="MGI" id="MGI:1931797">
    <property type="gene designation" value="Ckap2"/>
</dbReference>
<dbReference type="VEuPathDB" id="HostDB:ENSMUSG00000037725"/>
<dbReference type="eggNOG" id="ENOG502RUSI">
    <property type="taxonomic scope" value="Eukaryota"/>
</dbReference>
<dbReference type="GeneTree" id="ENSGT00530000063691"/>
<dbReference type="HOGENOM" id="CLU_026552_0_0_1"/>
<dbReference type="InParanoid" id="Q3V1H1"/>
<dbReference type="OMA" id="HEPEGQN"/>
<dbReference type="OrthoDB" id="9945093at2759"/>
<dbReference type="PhylomeDB" id="Q3V1H1"/>
<dbReference type="TreeFam" id="TF333003"/>
<dbReference type="BioGRID-ORCS" id="80986">
    <property type="hits" value="3 hits in 81 CRISPR screens"/>
</dbReference>
<dbReference type="ChiTaRS" id="Ckap2">
    <property type="organism name" value="mouse"/>
</dbReference>
<dbReference type="PRO" id="PR:Q3V1H1"/>
<dbReference type="Proteomes" id="UP000000589">
    <property type="component" value="Chromosome 8"/>
</dbReference>
<dbReference type="RNAct" id="Q3V1H1">
    <property type="molecule type" value="protein"/>
</dbReference>
<dbReference type="Bgee" id="ENSMUSG00000037725">
    <property type="expression patterns" value="Expressed in secondary oocyte and 168 other cell types or tissues"/>
</dbReference>
<dbReference type="GO" id="GO:0005813">
    <property type="term" value="C:centrosome"/>
    <property type="evidence" value="ECO:0007669"/>
    <property type="project" value="Ensembl"/>
</dbReference>
<dbReference type="GO" id="GO:0036064">
    <property type="term" value="C:ciliary basal body"/>
    <property type="evidence" value="ECO:0007669"/>
    <property type="project" value="Ensembl"/>
</dbReference>
<dbReference type="GO" id="GO:0005737">
    <property type="term" value="C:cytoplasm"/>
    <property type="evidence" value="ECO:0007669"/>
    <property type="project" value="UniProtKB-KW"/>
</dbReference>
<dbReference type="GO" id="GO:0005874">
    <property type="term" value="C:microtubule"/>
    <property type="evidence" value="ECO:0007669"/>
    <property type="project" value="UniProtKB-KW"/>
</dbReference>
<dbReference type="GO" id="GO:0015630">
    <property type="term" value="C:microtubule cytoskeleton"/>
    <property type="evidence" value="ECO:0000314"/>
    <property type="project" value="MGI"/>
</dbReference>
<dbReference type="GO" id="GO:0072686">
    <property type="term" value="C:mitotic spindle"/>
    <property type="evidence" value="ECO:0007669"/>
    <property type="project" value="Ensembl"/>
</dbReference>
<dbReference type="GO" id="GO:0005730">
    <property type="term" value="C:nucleolus"/>
    <property type="evidence" value="ECO:0007669"/>
    <property type="project" value="Ensembl"/>
</dbReference>
<dbReference type="GO" id="GO:0000922">
    <property type="term" value="C:spindle pole"/>
    <property type="evidence" value="ECO:0007669"/>
    <property type="project" value="UniProtKB-SubCell"/>
</dbReference>
<dbReference type="GO" id="GO:0006915">
    <property type="term" value="P:apoptotic process"/>
    <property type="evidence" value="ECO:0007669"/>
    <property type="project" value="UniProtKB-KW"/>
</dbReference>
<dbReference type="GO" id="GO:0000281">
    <property type="term" value="P:mitotic cytokinesis"/>
    <property type="evidence" value="ECO:0000266"/>
    <property type="project" value="MGI"/>
</dbReference>
<dbReference type="GO" id="GO:0007026">
    <property type="term" value="P:negative regulation of microtubule depolymerization"/>
    <property type="evidence" value="ECO:0000314"/>
    <property type="project" value="MGI"/>
</dbReference>
<dbReference type="GO" id="GO:0045944">
    <property type="term" value="P:positive regulation of transcription by RNA polymerase II"/>
    <property type="evidence" value="ECO:0000266"/>
    <property type="project" value="MGI"/>
</dbReference>
<dbReference type="InterPro" id="IPR029197">
    <property type="entry name" value="CKAP2_C"/>
</dbReference>
<dbReference type="InterPro" id="IPR026165">
    <property type="entry name" value="CKAP2_fam"/>
</dbReference>
<dbReference type="PANTHER" id="PTHR16076">
    <property type="entry name" value="CYTOSKELETON ASSOCIATED PROTEIN 2-RELATED"/>
    <property type="match status" value="1"/>
</dbReference>
<dbReference type="PANTHER" id="PTHR16076:SF8">
    <property type="entry name" value="CYTOSKELETON-ASSOCIATED PROTEIN 2"/>
    <property type="match status" value="1"/>
</dbReference>
<dbReference type="Pfam" id="PF15297">
    <property type="entry name" value="CKAP2_C"/>
    <property type="match status" value="1"/>
</dbReference>
<sequence>MAESRKRFLGRAARNPLPVTRDLQLPPTRRDQPAFREQRKQKLKEYLLIRKTVFPYKQENQISRDQKMITSEDRVQEGKKVVKLKTEVADKENIESTVEKNCIPLKAGEVTSSEIHNSKDNVQAVQLLSTRDDLPGQTVTLDPACHHKDNKKMQMTAEKPKQDSNVSKKRVLGYYHGQIVQSKINSFRKLPSVKGESLTTTKKLPTTVSKAMKAQSEPANTVSVKASTTAAATKFADAKPVSTASKDTLVRPPIRSLHSSSHGAAKQGLSRPLANVTVRKGMLDKESHRSEPVVSVVKAGSSQAPSRSIASKDAARTDSSNTRLMVKPKDTDQRRYTIAGASVHRSAQLKDTTAERKAQMTEWRTGKGKGLKRPPHSVVTQAEPKGQSENPVGSFWTTMAEEDEQRLFTEKVNKTISECLNLINEGCPKEEILATLNDLIHNIPDAKKLVKYWICLVRIEPITSPIENIISIYEKAILAGAQPIEEMRHIIIDILTTKSQEKVNLGENIEEAHATKEPIQEVNADANVGSGKPGEENEHHGKVEVYEDDQDNKIKDPDLTTPDSKTEAGCIIRYNVSSTPRLQSMKKMQHDKNSTLKELKFLTPVRRSRRIQDKTSRLPAMLKDHDPSVSSLEQLSELGGDAFVCRPNAALCPLFFETDVAEEE</sequence>
<evidence type="ECO:0000250" key="1"/>
<evidence type="ECO:0000250" key="2">
    <source>
        <dbReference type="UniProtKB" id="Q8WWK9"/>
    </source>
</evidence>
<evidence type="ECO:0000256" key="3">
    <source>
        <dbReference type="SAM" id="MobiDB-lite"/>
    </source>
</evidence>
<evidence type="ECO:0000269" key="4">
    <source>
    </source>
</evidence>
<evidence type="ECO:0000269" key="5">
    <source>
    </source>
</evidence>
<evidence type="ECO:0000305" key="6"/>
<evidence type="ECO:0000312" key="7">
    <source>
        <dbReference type="EMBL" id="AAU06608.1"/>
    </source>
</evidence>
<evidence type="ECO:0000312" key="8">
    <source>
        <dbReference type="EMBL" id="BAE21180.1"/>
    </source>
</evidence>
<evidence type="ECO:0000312" key="9">
    <source>
        <dbReference type="MGI" id="MGI:1931797"/>
    </source>
</evidence>
<evidence type="ECO:0007744" key="10">
    <source>
    </source>
</evidence>
<reference evidence="6 7" key="1">
    <citation type="journal article" date="2004" name="Cancer Sci.">
        <title>Identification of a mouse cytoskeleton-associated protein, CKAP2, with microtubule-stabilizing properties.</title>
        <authorList>
            <person name="Jin Y."/>
            <person name="Murakumo Y."/>
            <person name="Ueno K."/>
            <person name="Hashimoto M."/>
            <person name="Watanabe T."/>
            <person name="Shimoyama Y."/>
            <person name="Ichihara M."/>
            <person name="Takahashi M."/>
        </authorList>
    </citation>
    <scope>NUCLEOTIDE SEQUENCE [MRNA]</scope>
    <scope>FUNCTION</scope>
    <scope>ASSOCIATION WITH ALPHA-TUBULINS AND BETA-TUBULINS</scope>
    <scope>SUBCELLULAR LOCATION</scope>
    <scope>INDUCTION</scope>
    <source>
        <strain evidence="7">NIH Swiss</strain>
    </source>
</reference>
<reference evidence="8" key="2">
    <citation type="journal article" date="2005" name="Science">
        <title>The transcriptional landscape of the mammalian genome.</title>
        <authorList>
            <person name="Carninci P."/>
            <person name="Kasukawa T."/>
            <person name="Katayama S."/>
            <person name="Gough J."/>
            <person name="Frith M.C."/>
            <person name="Maeda N."/>
            <person name="Oyama R."/>
            <person name="Ravasi T."/>
            <person name="Lenhard B."/>
            <person name="Wells C."/>
            <person name="Kodzius R."/>
            <person name="Shimokawa K."/>
            <person name="Bajic V.B."/>
            <person name="Brenner S.E."/>
            <person name="Batalov S."/>
            <person name="Forrest A.R."/>
            <person name="Zavolan M."/>
            <person name="Davis M.J."/>
            <person name="Wilming L.G."/>
            <person name="Aidinis V."/>
            <person name="Allen J.E."/>
            <person name="Ambesi-Impiombato A."/>
            <person name="Apweiler R."/>
            <person name="Aturaliya R.N."/>
            <person name="Bailey T.L."/>
            <person name="Bansal M."/>
            <person name="Baxter L."/>
            <person name="Beisel K.W."/>
            <person name="Bersano T."/>
            <person name="Bono H."/>
            <person name="Chalk A.M."/>
            <person name="Chiu K.P."/>
            <person name="Choudhary V."/>
            <person name="Christoffels A."/>
            <person name="Clutterbuck D.R."/>
            <person name="Crowe M.L."/>
            <person name="Dalla E."/>
            <person name="Dalrymple B.P."/>
            <person name="de Bono B."/>
            <person name="Della Gatta G."/>
            <person name="di Bernardo D."/>
            <person name="Down T."/>
            <person name="Engstrom P."/>
            <person name="Fagiolini M."/>
            <person name="Faulkner G."/>
            <person name="Fletcher C.F."/>
            <person name="Fukushima T."/>
            <person name="Furuno M."/>
            <person name="Futaki S."/>
            <person name="Gariboldi M."/>
            <person name="Georgii-Hemming P."/>
            <person name="Gingeras T.R."/>
            <person name="Gojobori T."/>
            <person name="Green R.E."/>
            <person name="Gustincich S."/>
            <person name="Harbers M."/>
            <person name="Hayashi Y."/>
            <person name="Hensch T.K."/>
            <person name="Hirokawa N."/>
            <person name="Hill D."/>
            <person name="Huminiecki L."/>
            <person name="Iacono M."/>
            <person name="Ikeo K."/>
            <person name="Iwama A."/>
            <person name="Ishikawa T."/>
            <person name="Jakt M."/>
            <person name="Kanapin A."/>
            <person name="Katoh M."/>
            <person name="Kawasawa Y."/>
            <person name="Kelso J."/>
            <person name="Kitamura H."/>
            <person name="Kitano H."/>
            <person name="Kollias G."/>
            <person name="Krishnan S.P."/>
            <person name="Kruger A."/>
            <person name="Kummerfeld S.K."/>
            <person name="Kurochkin I.V."/>
            <person name="Lareau L.F."/>
            <person name="Lazarevic D."/>
            <person name="Lipovich L."/>
            <person name="Liu J."/>
            <person name="Liuni S."/>
            <person name="McWilliam S."/>
            <person name="Madan Babu M."/>
            <person name="Madera M."/>
            <person name="Marchionni L."/>
            <person name="Matsuda H."/>
            <person name="Matsuzawa S."/>
            <person name="Miki H."/>
            <person name="Mignone F."/>
            <person name="Miyake S."/>
            <person name="Morris K."/>
            <person name="Mottagui-Tabar S."/>
            <person name="Mulder N."/>
            <person name="Nakano N."/>
            <person name="Nakauchi H."/>
            <person name="Ng P."/>
            <person name="Nilsson R."/>
            <person name="Nishiguchi S."/>
            <person name="Nishikawa S."/>
            <person name="Nori F."/>
            <person name="Ohara O."/>
            <person name="Okazaki Y."/>
            <person name="Orlando V."/>
            <person name="Pang K.C."/>
            <person name="Pavan W.J."/>
            <person name="Pavesi G."/>
            <person name="Pesole G."/>
            <person name="Petrovsky N."/>
            <person name="Piazza S."/>
            <person name="Reed J."/>
            <person name="Reid J.F."/>
            <person name="Ring B.Z."/>
            <person name="Ringwald M."/>
            <person name="Rost B."/>
            <person name="Ruan Y."/>
            <person name="Salzberg S.L."/>
            <person name="Sandelin A."/>
            <person name="Schneider C."/>
            <person name="Schoenbach C."/>
            <person name="Sekiguchi K."/>
            <person name="Semple C.A."/>
            <person name="Seno S."/>
            <person name="Sessa L."/>
            <person name="Sheng Y."/>
            <person name="Shibata Y."/>
            <person name="Shimada H."/>
            <person name="Shimada K."/>
            <person name="Silva D."/>
            <person name="Sinclair B."/>
            <person name="Sperling S."/>
            <person name="Stupka E."/>
            <person name="Sugiura K."/>
            <person name="Sultana R."/>
            <person name="Takenaka Y."/>
            <person name="Taki K."/>
            <person name="Tammoja K."/>
            <person name="Tan S.L."/>
            <person name="Tang S."/>
            <person name="Taylor M.S."/>
            <person name="Tegner J."/>
            <person name="Teichmann S.A."/>
            <person name="Ueda H.R."/>
            <person name="van Nimwegen E."/>
            <person name="Verardo R."/>
            <person name="Wei C.L."/>
            <person name="Yagi K."/>
            <person name="Yamanishi H."/>
            <person name="Zabarovsky E."/>
            <person name="Zhu S."/>
            <person name="Zimmer A."/>
            <person name="Hide W."/>
            <person name="Bult C."/>
            <person name="Grimmond S.M."/>
            <person name="Teasdale R.D."/>
            <person name="Liu E.T."/>
            <person name="Brusic V."/>
            <person name="Quackenbush J."/>
            <person name="Wahlestedt C."/>
            <person name="Mattick J.S."/>
            <person name="Hume D.A."/>
            <person name="Kai C."/>
            <person name="Sasaki D."/>
            <person name="Tomaru Y."/>
            <person name="Fukuda S."/>
            <person name="Kanamori-Katayama M."/>
            <person name="Suzuki M."/>
            <person name="Aoki J."/>
            <person name="Arakawa T."/>
            <person name="Iida J."/>
            <person name="Imamura K."/>
            <person name="Itoh M."/>
            <person name="Kato T."/>
            <person name="Kawaji H."/>
            <person name="Kawagashira N."/>
            <person name="Kawashima T."/>
            <person name="Kojima M."/>
            <person name="Kondo S."/>
            <person name="Konno H."/>
            <person name="Nakano K."/>
            <person name="Ninomiya N."/>
            <person name="Nishio T."/>
            <person name="Okada M."/>
            <person name="Plessy C."/>
            <person name="Shibata K."/>
            <person name="Shiraki T."/>
            <person name="Suzuki S."/>
            <person name="Tagami M."/>
            <person name="Waki K."/>
            <person name="Watahiki A."/>
            <person name="Okamura-Oho Y."/>
            <person name="Suzuki H."/>
            <person name="Kawai J."/>
            <person name="Hayashizaki Y."/>
        </authorList>
    </citation>
    <scope>NUCLEOTIDE SEQUENCE [LARGE SCALE MRNA]</scope>
    <source>
        <strain evidence="8">C57BL/6J</strain>
        <tissue evidence="8">Skin</tissue>
    </source>
</reference>
<reference key="3">
    <citation type="journal article" date="2004" name="Genome Res.">
        <title>The status, quality, and expansion of the NIH full-length cDNA project: the Mammalian Gene Collection (MGC).</title>
        <authorList>
            <consortium name="The MGC Project Team"/>
        </authorList>
    </citation>
    <scope>NUCLEOTIDE SEQUENCE [LARGE SCALE MRNA]</scope>
    <source>
        <tissue>Brain</tissue>
    </source>
</reference>
<reference evidence="6" key="4">
    <citation type="journal article" date="2005" name="Cancer Res.">
        <title>Ckap2 regulates aneuploidy, cell cycling, and cell death in a p53-dependent manner.</title>
        <authorList>
            <person name="Tsuchihara K."/>
            <person name="Lapin V."/>
            <person name="Bakal C."/>
            <person name="Okada H."/>
            <person name="Brown L."/>
            <person name="Hirota-Tsuchihara M."/>
            <person name="Zaugg K."/>
            <person name="Ho A."/>
            <person name="Itie-Youten A."/>
            <person name="Harris-Brandts M."/>
            <person name="Rottapel R."/>
            <person name="Richardson C.D."/>
            <person name="Benchimol S."/>
            <person name="Mak T.W."/>
        </authorList>
    </citation>
    <scope>FUNCTION</scope>
    <scope>SUBCELLULAR LOCATION</scope>
    <scope>INDUCTION</scope>
</reference>
<reference key="5">
    <citation type="journal article" date="2010" name="Cell">
        <title>A tissue-specific atlas of mouse protein phosphorylation and expression.</title>
        <authorList>
            <person name="Huttlin E.L."/>
            <person name="Jedrychowski M.P."/>
            <person name="Elias J.E."/>
            <person name="Goswami T."/>
            <person name="Rad R."/>
            <person name="Beausoleil S.A."/>
            <person name="Villen J."/>
            <person name="Haas W."/>
            <person name="Sowa M.E."/>
            <person name="Gygi S.P."/>
        </authorList>
    </citation>
    <scope>PHOSPHORYLATION [LARGE SCALE ANALYSIS] AT THR-561</scope>
    <scope>IDENTIFICATION BY MASS SPECTROMETRY [LARGE SCALE ANALYSIS]</scope>
    <source>
        <tissue>Lung</tissue>
        <tissue>Spleen</tissue>
    </source>
</reference>
<name>CKAP2_MOUSE</name>